<organism>
    <name type="scientific">Idiomarina loihiensis (strain ATCC BAA-735 / DSM 15497 / L2-TR)</name>
    <dbReference type="NCBI Taxonomy" id="283942"/>
    <lineage>
        <taxon>Bacteria</taxon>
        <taxon>Pseudomonadati</taxon>
        <taxon>Pseudomonadota</taxon>
        <taxon>Gammaproteobacteria</taxon>
        <taxon>Alteromonadales</taxon>
        <taxon>Idiomarinaceae</taxon>
        <taxon>Idiomarina</taxon>
    </lineage>
</organism>
<comment type="function">
    <text evidence="1">Bifunctional enzyme with both catalase and broad-spectrum peroxidase activity.</text>
</comment>
<comment type="catalytic activity">
    <reaction evidence="1">
        <text>H2O2 + AH2 = A + 2 H2O</text>
        <dbReference type="Rhea" id="RHEA:30275"/>
        <dbReference type="ChEBI" id="CHEBI:13193"/>
        <dbReference type="ChEBI" id="CHEBI:15377"/>
        <dbReference type="ChEBI" id="CHEBI:16240"/>
        <dbReference type="ChEBI" id="CHEBI:17499"/>
        <dbReference type="EC" id="1.11.1.21"/>
    </reaction>
</comment>
<comment type="catalytic activity">
    <reaction evidence="1">
        <text>2 H2O2 = O2 + 2 H2O</text>
        <dbReference type="Rhea" id="RHEA:20309"/>
        <dbReference type="ChEBI" id="CHEBI:15377"/>
        <dbReference type="ChEBI" id="CHEBI:15379"/>
        <dbReference type="ChEBI" id="CHEBI:16240"/>
        <dbReference type="EC" id="1.11.1.21"/>
    </reaction>
</comment>
<comment type="cofactor">
    <cofactor evidence="1">
        <name>heme b</name>
        <dbReference type="ChEBI" id="CHEBI:60344"/>
    </cofactor>
    <text evidence="1">Binds 1 heme b (iron(II)-protoporphyrin IX) group per dimer.</text>
</comment>
<comment type="subunit">
    <text evidence="1">Homodimer or homotetramer.</text>
</comment>
<comment type="PTM">
    <text evidence="1">Formation of the three residue Trp-Tyr-Met cross-link is important for the catalase, but not the peroxidase activity of the enzyme.</text>
</comment>
<comment type="similarity">
    <text evidence="1">Belongs to the peroxidase family. Peroxidase/catalase subfamily.</text>
</comment>
<sequence>MTKSSGGGKCPIMHGSMTSEKKTNTHWWPNSLKLEILRQHDTKANPLDEDFNYAEEFKKINLEELKQDLKNFMTDSQEWWPADWGHYGGLMIRMAWHSAGSYRLADGRGGGGTGNQRFAPLNSWPDNVSLDKARRLLWPIKKKYGNKLSWADLFILAGNMAYESMGLKTFGFAGGREDIWHPEEDTYWGSEKEWLAETKNRYSSDEERDSLENPLAAVQMGLIYVNPEGVDGNPDPLRTAKDVRETFKRMAMNDEETCALTAGGHTVGKCHGNGKEENLGPEPEAADVEEQGMGWRNSGGKGVGRDTMSSGIEGAWTTNPTQWDNGYFYLLFNYEWELKKSPAGAWQWEPIDIKEEDKPVDVEDPSIRHNPIMTDADMAMKMDPDYRKIAEKFYKDPEYFADVFARAWFKLTHRDLGPKDRYLGADVPEEDLIWQDPIPKVDYSLSEQEIADLKEKLLNTELTSYELISTAWDSARNFRCSDFRGGANGARIRLAPQKDWHGNEPEKLHKVLRVLEDLQSTLDKKVSLADLIVLGGTAAVEKAAKDAGYNVTVPFAPGRGDATDEQTDVESFEPLEPLHDGYRNYLKKDYAVPAEELMLDRTHLMGLTAPEMTVLVGGMRALGANYGESEHGVFTDRVGTLTNDFFVNLTDMNNVWKKADDHYEVRDRKTDELKWTASRIDLVFGSNSILRSYSELYAQDDNQEKFVKDFVKAWTKVMNADRFDL</sequence>
<feature type="chain" id="PRO_0000354810" description="Catalase-peroxidase 1">
    <location>
        <begin position="1"/>
        <end position="725"/>
    </location>
</feature>
<feature type="active site" description="Proton acceptor" evidence="1">
    <location>
        <position position="97"/>
    </location>
</feature>
<feature type="binding site" description="axial binding residue" evidence="1">
    <location>
        <position position="265"/>
    </location>
    <ligand>
        <name>heme b</name>
        <dbReference type="ChEBI" id="CHEBI:60344"/>
    </ligand>
    <ligandPart>
        <name>Fe</name>
        <dbReference type="ChEBI" id="CHEBI:18248"/>
    </ligandPart>
</feature>
<feature type="site" description="Transition state stabilizer" evidence="1">
    <location>
        <position position="93"/>
    </location>
</feature>
<feature type="cross-link" description="Tryptophyl-tyrosyl-methioninium (Trp-Tyr) (with M-250)" evidence="1">
    <location>
        <begin position="96"/>
        <end position="224"/>
    </location>
</feature>
<feature type="cross-link" description="Tryptophyl-tyrosyl-methioninium (Tyr-Met) (with W-96)" evidence="1">
    <location>
        <begin position="224"/>
        <end position="250"/>
    </location>
</feature>
<keyword id="KW-0349">Heme</keyword>
<keyword id="KW-0376">Hydrogen peroxide</keyword>
<keyword id="KW-0408">Iron</keyword>
<keyword id="KW-0479">Metal-binding</keyword>
<keyword id="KW-0560">Oxidoreductase</keyword>
<keyword id="KW-0575">Peroxidase</keyword>
<keyword id="KW-1185">Reference proteome</keyword>
<dbReference type="EC" id="1.11.1.21" evidence="1"/>
<dbReference type="EMBL" id="AE017340">
    <property type="protein sequence ID" value="AAV80951.1"/>
    <property type="molecule type" value="Genomic_DNA"/>
</dbReference>
<dbReference type="RefSeq" id="WP_011233371.1">
    <property type="nucleotide sequence ID" value="NC_006512.1"/>
</dbReference>
<dbReference type="SMR" id="Q5QXC3"/>
<dbReference type="STRING" id="283942.IL0108"/>
<dbReference type="PeroxiBase" id="2638">
    <property type="entry name" value="IlCP02"/>
</dbReference>
<dbReference type="GeneID" id="41335254"/>
<dbReference type="KEGG" id="ilo:IL0108"/>
<dbReference type="eggNOG" id="COG0376">
    <property type="taxonomic scope" value="Bacteria"/>
</dbReference>
<dbReference type="HOGENOM" id="CLU_025424_2_0_6"/>
<dbReference type="OrthoDB" id="9759743at2"/>
<dbReference type="Proteomes" id="UP000001171">
    <property type="component" value="Chromosome"/>
</dbReference>
<dbReference type="GO" id="GO:0005829">
    <property type="term" value="C:cytosol"/>
    <property type="evidence" value="ECO:0007669"/>
    <property type="project" value="TreeGrafter"/>
</dbReference>
<dbReference type="GO" id="GO:0004096">
    <property type="term" value="F:catalase activity"/>
    <property type="evidence" value="ECO:0007669"/>
    <property type="project" value="UniProtKB-UniRule"/>
</dbReference>
<dbReference type="GO" id="GO:0020037">
    <property type="term" value="F:heme binding"/>
    <property type="evidence" value="ECO:0007669"/>
    <property type="project" value="InterPro"/>
</dbReference>
<dbReference type="GO" id="GO:0046872">
    <property type="term" value="F:metal ion binding"/>
    <property type="evidence" value="ECO:0007669"/>
    <property type="project" value="UniProtKB-KW"/>
</dbReference>
<dbReference type="GO" id="GO:0070301">
    <property type="term" value="P:cellular response to hydrogen peroxide"/>
    <property type="evidence" value="ECO:0007669"/>
    <property type="project" value="TreeGrafter"/>
</dbReference>
<dbReference type="GO" id="GO:0042744">
    <property type="term" value="P:hydrogen peroxide catabolic process"/>
    <property type="evidence" value="ECO:0007669"/>
    <property type="project" value="UniProtKB-KW"/>
</dbReference>
<dbReference type="CDD" id="cd00649">
    <property type="entry name" value="catalase_peroxidase_1"/>
    <property type="match status" value="1"/>
</dbReference>
<dbReference type="CDD" id="cd08200">
    <property type="entry name" value="catalase_peroxidase_2"/>
    <property type="match status" value="1"/>
</dbReference>
<dbReference type="FunFam" id="1.10.420.10:FF:000002">
    <property type="entry name" value="Catalase-peroxidase"/>
    <property type="match status" value="1"/>
</dbReference>
<dbReference type="FunFam" id="1.10.420.10:FF:000004">
    <property type="entry name" value="Catalase-peroxidase"/>
    <property type="match status" value="1"/>
</dbReference>
<dbReference type="FunFam" id="1.10.520.10:FF:000002">
    <property type="entry name" value="Catalase-peroxidase"/>
    <property type="match status" value="1"/>
</dbReference>
<dbReference type="Gene3D" id="1.10.520.10">
    <property type="match status" value="2"/>
</dbReference>
<dbReference type="Gene3D" id="1.10.420.10">
    <property type="entry name" value="Peroxidase, domain 2"/>
    <property type="match status" value="2"/>
</dbReference>
<dbReference type="HAMAP" id="MF_01961">
    <property type="entry name" value="Catal_peroxid"/>
    <property type="match status" value="1"/>
</dbReference>
<dbReference type="InterPro" id="IPR000763">
    <property type="entry name" value="Catalase_peroxidase"/>
</dbReference>
<dbReference type="InterPro" id="IPR002016">
    <property type="entry name" value="Haem_peroxidase"/>
</dbReference>
<dbReference type="InterPro" id="IPR010255">
    <property type="entry name" value="Haem_peroxidase_sf"/>
</dbReference>
<dbReference type="InterPro" id="IPR019794">
    <property type="entry name" value="Peroxidases_AS"/>
</dbReference>
<dbReference type="NCBIfam" id="TIGR00198">
    <property type="entry name" value="cat_per_HPI"/>
    <property type="match status" value="1"/>
</dbReference>
<dbReference type="NCBIfam" id="NF011635">
    <property type="entry name" value="PRK15061.1"/>
    <property type="match status" value="1"/>
</dbReference>
<dbReference type="PANTHER" id="PTHR30555:SF6">
    <property type="entry name" value="CATALASE-PEROXIDASE"/>
    <property type="match status" value="1"/>
</dbReference>
<dbReference type="PANTHER" id="PTHR30555">
    <property type="entry name" value="HYDROPEROXIDASE I, BIFUNCTIONAL CATALASE-PEROXIDASE"/>
    <property type="match status" value="1"/>
</dbReference>
<dbReference type="Pfam" id="PF00141">
    <property type="entry name" value="peroxidase"/>
    <property type="match status" value="2"/>
</dbReference>
<dbReference type="PRINTS" id="PR00460">
    <property type="entry name" value="BPEROXIDASE"/>
</dbReference>
<dbReference type="PRINTS" id="PR00458">
    <property type="entry name" value="PEROXIDASE"/>
</dbReference>
<dbReference type="SUPFAM" id="SSF48113">
    <property type="entry name" value="Heme-dependent peroxidases"/>
    <property type="match status" value="2"/>
</dbReference>
<dbReference type="PROSITE" id="PS00436">
    <property type="entry name" value="PEROXIDASE_2"/>
    <property type="match status" value="1"/>
</dbReference>
<dbReference type="PROSITE" id="PS50873">
    <property type="entry name" value="PEROXIDASE_4"/>
    <property type="match status" value="1"/>
</dbReference>
<protein>
    <recommendedName>
        <fullName evidence="1">Catalase-peroxidase 1</fullName>
        <shortName evidence="1">CP 1</shortName>
        <ecNumber evidence="1">1.11.1.21</ecNumber>
    </recommendedName>
    <alternativeName>
        <fullName evidence="1">Peroxidase/catalase 1</fullName>
    </alternativeName>
</protein>
<gene>
    <name evidence="1" type="primary">katG1</name>
    <name type="ordered locus">IL0108</name>
</gene>
<reference key="1">
    <citation type="journal article" date="2004" name="Proc. Natl. Acad. Sci. U.S.A.">
        <title>Genome sequence of the deep-sea gamma-proteobacterium Idiomarina loihiensis reveals amino acid fermentation as a source of carbon and energy.</title>
        <authorList>
            <person name="Hou S."/>
            <person name="Saw J.H."/>
            <person name="Lee K.S."/>
            <person name="Freitas T.A."/>
            <person name="Belisle C."/>
            <person name="Kawarabayasi Y."/>
            <person name="Donachie S.P."/>
            <person name="Pikina A."/>
            <person name="Galperin M.Y."/>
            <person name="Koonin E.V."/>
            <person name="Makarova K.S."/>
            <person name="Omelchenko M.V."/>
            <person name="Sorokin A."/>
            <person name="Wolf Y.I."/>
            <person name="Li Q.X."/>
            <person name="Keum Y.S."/>
            <person name="Campbell S."/>
            <person name="Denery J."/>
            <person name="Aizawa S."/>
            <person name="Shibata S."/>
            <person name="Malahoff A."/>
            <person name="Alam M."/>
        </authorList>
    </citation>
    <scope>NUCLEOTIDE SEQUENCE [LARGE SCALE GENOMIC DNA]</scope>
    <source>
        <strain>ATCC BAA-735 / DSM 15497 / L2-TR</strain>
    </source>
</reference>
<accession>Q5QXC3</accession>
<name>KATG1_IDILO</name>
<proteinExistence type="inferred from homology"/>
<evidence type="ECO:0000255" key="1">
    <source>
        <dbReference type="HAMAP-Rule" id="MF_01961"/>
    </source>
</evidence>